<protein>
    <recommendedName>
        <fullName evidence="1">FMN-dependent NADH:quinone oxidoreductase 2</fullName>
        <ecNumber evidence="1">1.6.5.-</ecNumber>
    </recommendedName>
    <alternativeName>
        <fullName evidence="1">Azo-dye reductase 2</fullName>
    </alternativeName>
    <alternativeName>
        <fullName evidence="1">FMN-dependent NADH-azo compound oxidoreductase 2</fullName>
    </alternativeName>
    <alternativeName>
        <fullName evidence="1">FMN-dependent NADH-azoreductase 2</fullName>
        <ecNumber evidence="1">1.7.1.17</ecNumber>
    </alternativeName>
</protein>
<name>AZOR2_LACPL</name>
<proteinExistence type="inferred from homology"/>
<evidence type="ECO:0000255" key="1">
    <source>
        <dbReference type="HAMAP-Rule" id="MF_01216"/>
    </source>
</evidence>
<reference key="1">
    <citation type="journal article" date="2003" name="Proc. Natl. Acad. Sci. U.S.A.">
        <title>Complete genome sequence of Lactobacillus plantarum WCFS1.</title>
        <authorList>
            <person name="Kleerebezem M."/>
            <person name="Boekhorst J."/>
            <person name="van Kranenburg R."/>
            <person name="Molenaar D."/>
            <person name="Kuipers O.P."/>
            <person name="Leer R."/>
            <person name="Tarchini R."/>
            <person name="Peters S.A."/>
            <person name="Sandbrink H.M."/>
            <person name="Fiers M.W.E.J."/>
            <person name="Stiekema W."/>
            <person name="Klein Lankhorst R.M."/>
            <person name="Bron P.A."/>
            <person name="Hoffer S.M."/>
            <person name="Nierop Groot M.N."/>
            <person name="Kerkhoven R."/>
            <person name="De Vries M."/>
            <person name="Ursing B."/>
            <person name="De Vos W.M."/>
            <person name="Siezen R.J."/>
        </authorList>
    </citation>
    <scope>NUCLEOTIDE SEQUENCE [LARGE SCALE GENOMIC DNA]</scope>
    <source>
        <strain>ATCC BAA-793 / NCIMB 8826 / WCFS1</strain>
    </source>
</reference>
<reference key="2">
    <citation type="journal article" date="2012" name="J. Bacteriol.">
        <title>Complete resequencing and reannotation of the Lactobacillus plantarum WCFS1 genome.</title>
        <authorList>
            <person name="Siezen R.J."/>
            <person name="Francke C."/>
            <person name="Renckens B."/>
            <person name="Boekhorst J."/>
            <person name="Wels M."/>
            <person name="Kleerebezem M."/>
            <person name="van Hijum S.A."/>
        </authorList>
    </citation>
    <scope>NUCLEOTIDE SEQUENCE [LARGE SCALE GENOMIC DNA]</scope>
    <scope>GENOME REANNOTATION</scope>
    <source>
        <strain>ATCC BAA-793 / NCIMB 8826 / WCFS1</strain>
    </source>
</reference>
<dbReference type="EC" id="1.6.5.-" evidence="1"/>
<dbReference type="EC" id="1.7.1.17" evidence="1"/>
<dbReference type="EMBL" id="AL935263">
    <property type="protein sequence ID" value="CCC78389.1"/>
    <property type="molecule type" value="Genomic_DNA"/>
</dbReference>
<dbReference type="RefSeq" id="WP_011101225.1">
    <property type="nucleotide sequence ID" value="NC_004567.2"/>
</dbReference>
<dbReference type="RefSeq" id="YP_004888903.1">
    <property type="nucleotide sequence ID" value="NC_004567.2"/>
</dbReference>
<dbReference type="SMR" id="Q88Y41"/>
<dbReference type="STRING" id="220668.lp_0955"/>
<dbReference type="EnsemblBacteria" id="CCC78389">
    <property type="protein sequence ID" value="CCC78389"/>
    <property type="gene ID" value="lp_0955"/>
</dbReference>
<dbReference type="KEGG" id="lpl:lp_0955"/>
<dbReference type="PATRIC" id="fig|220668.9.peg.812"/>
<dbReference type="eggNOG" id="COG1182">
    <property type="taxonomic scope" value="Bacteria"/>
</dbReference>
<dbReference type="HOGENOM" id="CLU_088964_3_1_9"/>
<dbReference type="OrthoDB" id="9805013at2"/>
<dbReference type="PhylomeDB" id="Q88Y41"/>
<dbReference type="Proteomes" id="UP000000432">
    <property type="component" value="Chromosome"/>
</dbReference>
<dbReference type="GO" id="GO:0009055">
    <property type="term" value="F:electron transfer activity"/>
    <property type="evidence" value="ECO:0007669"/>
    <property type="project" value="UniProtKB-UniRule"/>
</dbReference>
<dbReference type="GO" id="GO:0010181">
    <property type="term" value="F:FMN binding"/>
    <property type="evidence" value="ECO:0007669"/>
    <property type="project" value="UniProtKB-UniRule"/>
</dbReference>
<dbReference type="GO" id="GO:0016652">
    <property type="term" value="F:oxidoreductase activity, acting on NAD(P)H as acceptor"/>
    <property type="evidence" value="ECO:0007669"/>
    <property type="project" value="UniProtKB-UniRule"/>
</dbReference>
<dbReference type="GO" id="GO:0016655">
    <property type="term" value="F:oxidoreductase activity, acting on NAD(P)H, quinone or similar compound as acceptor"/>
    <property type="evidence" value="ECO:0007669"/>
    <property type="project" value="InterPro"/>
</dbReference>
<dbReference type="Gene3D" id="3.40.50.360">
    <property type="match status" value="1"/>
</dbReference>
<dbReference type="HAMAP" id="MF_01216">
    <property type="entry name" value="Azoreductase_type1"/>
    <property type="match status" value="1"/>
</dbReference>
<dbReference type="InterPro" id="IPR003680">
    <property type="entry name" value="Flavodoxin_fold"/>
</dbReference>
<dbReference type="InterPro" id="IPR029039">
    <property type="entry name" value="Flavoprotein-like_sf"/>
</dbReference>
<dbReference type="InterPro" id="IPR050104">
    <property type="entry name" value="FMN-dep_NADH:Q_OxRdtase_AzoR1"/>
</dbReference>
<dbReference type="InterPro" id="IPR023048">
    <property type="entry name" value="NADH:quinone_OxRdtase_FMN_depd"/>
</dbReference>
<dbReference type="PANTHER" id="PTHR43741">
    <property type="entry name" value="FMN-DEPENDENT NADH-AZOREDUCTASE 1"/>
    <property type="match status" value="1"/>
</dbReference>
<dbReference type="PANTHER" id="PTHR43741:SF7">
    <property type="entry name" value="FMN-DEPENDENT NADH:QUINONE OXIDOREDUCTASE"/>
    <property type="match status" value="1"/>
</dbReference>
<dbReference type="Pfam" id="PF02525">
    <property type="entry name" value="Flavodoxin_2"/>
    <property type="match status" value="1"/>
</dbReference>
<dbReference type="SUPFAM" id="SSF52218">
    <property type="entry name" value="Flavoproteins"/>
    <property type="match status" value="1"/>
</dbReference>
<comment type="function">
    <text evidence="1">Quinone reductase that provides resistance to thiol-specific stress caused by electrophilic quinones.</text>
</comment>
<comment type="function">
    <text evidence="1">Also exhibits azoreductase activity. Catalyzes the reductive cleavage of the azo bond in aromatic azo compounds to the corresponding amines.</text>
</comment>
<comment type="catalytic activity">
    <reaction evidence="1">
        <text>2 a quinone + NADH + H(+) = 2 a 1,4-benzosemiquinone + NAD(+)</text>
        <dbReference type="Rhea" id="RHEA:65952"/>
        <dbReference type="ChEBI" id="CHEBI:15378"/>
        <dbReference type="ChEBI" id="CHEBI:57540"/>
        <dbReference type="ChEBI" id="CHEBI:57945"/>
        <dbReference type="ChEBI" id="CHEBI:132124"/>
        <dbReference type="ChEBI" id="CHEBI:134225"/>
    </reaction>
</comment>
<comment type="catalytic activity">
    <reaction evidence="1">
        <text>N,N-dimethyl-1,4-phenylenediamine + anthranilate + 2 NAD(+) = 2-(4-dimethylaminophenyl)diazenylbenzoate + 2 NADH + 2 H(+)</text>
        <dbReference type="Rhea" id="RHEA:55872"/>
        <dbReference type="ChEBI" id="CHEBI:15378"/>
        <dbReference type="ChEBI" id="CHEBI:15783"/>
        <dbReference type="ChEBI" id="CHEBI:16567"/>
        <dbReference type="ChEBI" id="CHEBI:57540"/>
        <dbReference type="ChEBI" id="CHEBI:57945"/>
        <dbReference type="ChEBI" id="CHEBI:71579"/>
        <dbReference type="EC" id="1.7.1.17"/>
    </reaction>
</comment>
<comment type="cofactor">
    <cofactor evidence="1">
        <name>FMN</name>
        <dbReference type="ChEBI" id="CHEBI:58210"/>
    </cofactor>
    <text evidence="1">Binds 1 FMN per subunit.</text>
</comment>
<comment type="subunit">
    <text evidence="1">Homodimer.</text>
</comment>
<comment type="similarity">
    <text evidence="1">Belongs to the azoreductase type 1 family.</text>
</comment>
<organism>
    <name type="scientific">Lactiplantibacillus plantarum (strain ATCC BAA-793 / NCIMB 8826 / WCFS1)</name>
    <name type="common">Lactobacillus plantarum</name>
    <dbReference type="NCBI Taxonomy" id="220668"/>
    <lineage>
        <taxon>Bacteria</taxon>
        <taxon>Bacillati</taxon>
        <taxon>Bacillota</taxon>
        <taxon>Bacilli</taxon>
        <taxon>Lactobacillales</taxon>
        <taxon>Lactobacillaceae</taxon>
        <taxon>Lactiplantibacillus</taxon>
    </lineage>
</organism>
<gene>
    <name evidence="1" type="primary">azoR2</name>
    <name type="ordered locus">lp_0955</name>
</gene>
<sequence>MTKLLMINAHPHTTVPSASLTVAASFKTAYQQTHPHDEITTRDLYQDGVPALNDTTFEAWRKRKYGEELTSVEAELLSRHASWLAEFLAADKIVFVNPMYNHFLPAELKQYLDLTAVARKTFKYTVNGPVGLLPDKHVLHIQAAGGYYHQPDQHNQVEAGDPYLRGMMQLYGIQDYRTIFIEGLDQFPEQREQAITAAQVAAEKLAGEF</sequence>
<feature type="chain" id="PRO_0000166337" description="FMN-dependent NADH:quinone oxidoreductase 2">
    <location>
        <begin position="1"/>
        <end position="209"/>
    </location>
</feature>
<feature type="binding site" evidence="1">
    <location>
        <begin position="17"/>
        <end position="19"/>
    </location>
    <ligand>
        <name>FMN</name>
        <dbReference type="ChEBI" id="CHEBI:58210"/>
    </ligand>
</feature>
<accession>Q88Y41</accession>
<accession>F9UMF0</accession>
<keyword id="KW-0285">Flavoprotein</keyword>
<keyword id="KW-0288">FMN</keyword>
<keyword id="KW-0520">NAD</keyword>
<keyword id="KW-0560">Oxidoreductase</keyword>
<keyword id="KW-1185">Reference proteome</keyword>